<dbReference type="EMBL" id="X53368">
    <property type="protein sequence ID" value="CAA37448.1"/>
    <property type="molecule type" value="Genomic_DNA"/>
</dbReference>
<dbReference type="PIR" id="S11442">
    <property type="entry name" value="S11442"/>
</dbReference>
<dbReference type="SMR" id="P19196"/>
<dbReference type="GO" id="GO:0009279">
    <property type="term" value="C:cell outer membrane"/>
    <property type="evidence" value="ECO:0007669"/>
    <property type="project" value="UniProtKB-SubCell"/>
</dbReference>
<dbReference type="GO" id="GO:0007155">
    <property type="term" value="P:cell adhesion"/>
    <property type="evidence" value="ECO:0007669"/>
    <property type="project" value="InterPro"/>
</dbReference>
<dbReference type="FunFam" id="2.40.160.160:FF:000001">
    <property type="entry name" value="Intimin-like inverse autotransporter SinH"/>
    <property type="match status" value="1"/>
</dbReference>
<dbReference type="Gene3D" id="2.60.40.1080">
    <property type="match status" value="1"/>
</dbReference>
<dbReference type="Gene3D" id="2.60.40.10">
    <property type="entry name" value="Immunoglobulins"/>
    <property type="match status" value="2"/>
</dbReference>
<dbReference type="Gene3D" id="2.40.160.160">
    <property type="entry name" value="Inverse autotransporter, beta-domain"/>
    <property type="match status" value="1"/>
</dbReference>
<dbReference type="Gene3D" id="3.10.100.10">
    <property type="entry name" value="Mannose-Binding Protein A, subunit A"/>
    <property type="match status" value="1"/>
</dbReference>
<dbReference type="InterPro" id="IPR003344">
    <property type="entry name" value="Big_1_dom"/>
</dbReference>
<dbReference type="InterPro" id="IPR016186">
    <property type="entry name" value="C-type_lectin-like/link_sf"/>
</dbReference>
<dbReference type="InterPro" id="IPR016187">
    <property type="entry name" value="CTDL_fold"/>
</dbReference>
<dbReference type="InterPro" id="IPR024519">
    <property type="entry name" value="IAT_beta"/>
</dbReference>
<dbReference type="InterPro" id="IPR038177">
    <property type="entry name" value="IAT_beta_sf"/>
</dbReference>
<dbReference type="InterPro" id="IPR013783">
    <property type="entry name" value="Ig-like_fold"/>
</dbReference>
<dbReference type="InterPro" id="IPR051715">
    <property type="entry name" value="Intimin-Invasin_domain"/>
</dbReference>
<dbReference type="InterPro" id="IPR003535">
    <property type="entry name" value="Intimin/invasin_bac"/>
</dbReference>
<dbReference type="InterPro" id="IPR013117">
    <property type="entry name" value="Intimin_C"/>
</dbReference>
<dbReference type="InterPro" id="IPR008964">
    <property type="entry name" value="Invasin/intimin_cell_adhesion"/>
</dbReference>
<dbReference type="InterPro" id="IPR048658">
    <property type="entry name" value="Invasin_D4"/>
</dbReference>
<dbReference type="InterPro" id="IPR015217">
    <property type="entry name" value="Invasin_dom_3"/>
</dbReference>
<dbReference type="PANTHER" id="PTHR39576">
    <property type="entry name" value="ATTACHING AND EFFACING PROTEIN HOMOLOG-RELATED-RELATED"/>
    <property type="match status" value="1"/>
</dbReference>
<dbReference type="PANTHER" id="PTHR39576:SF1">
    <property type="entry name" value="INVASIN"/>
    <property type="match status" value="1"/>
</dbReference>
<dbReference type="Pfam" id="PF02369">
    <property type="entry name" value="Big_1"/>
    <property type="match status" value="1"/>
</dbReference>
<dbReference type="Pfam" id="PF11924">
    <property type="entry name" value="IAT_beta"/>
    <property type="match status" value="1"/>
</dbReference>
<dbReference type="Pfam" id="PF07979">
    <property type="entry name" value="Intimin_C"/>
    <property type="match status" value="1"/>
</dbReference>
<dbReference type="Pfam" id="PF09134">
    <property type="entry name" value="Invasin_D3"/>
    <property type="match status" value="1"/>
</dbReference>
<dbReference type="Pfam" id="PF21764">
    <property type="entry name" value="Invasin_D4"/>
    <property type="match status" value="1"/>
</dbReference>
<dbReference type="PRINTS" id="PR01369">
    <property type="entry name" value="INTIMIN"/>
</dbReference>
<dbReference type="SMART" id="SM00634">
    <property type="entry name" value="BID_1"/>
    <property type="match status" value="1"/>
</dbReference>
<dbReference type="SUPFAM" id="SSF56436">
    <property type="entry name" value="C-type lectin-like"/>
    <property type="match status" value="1"/>
</dbReference>
<dbReference type="SUPFAM" id="SSF49373">
    <property type="entry name" value="Invasin/intimin cell-adhesion fragments"/>
    <property type="match status" value="3"/>
</dbReference>
<dbReference type="PROSITE" id="PS51127">
    <property type="entry name" value="BIG1"/>
    <property type="match status" value="1"/>
</dbReference>
<name>INVA_YEREN</name>
<sequence>MYSFFNTLTVTKIISRLILSIGLIFGIFTYGFSQQHYFNSEALENPAEHNEAFNKIISTGTSLAVSGNASNITRSMVNDAANQEVKHWLNRFGTTQVNVNFDKKFSLKESSLDWLLPWYDSASYVFFSQLGIRNKDSRNTLNIGAGVRTFQQSWMYGFNTSYDNDMTGHNHRIGVGAEAWTDYLQLSANGYFRLNGWHQSRDFADYNERPASGGDIHVKAYLPALPQLGGKLKYEQYRGERVALFGKDNLQSNPYAVTTGLIYTPIPFITLGVDQRMGKSRQHEIQWNLQMDYRLGESFRSQFSPAVVAGTRLLAESRYNLVERNPNIVLEYQKQNTIKLAFSPAVLSGLPGQVYSVSAQIQSQSALQRILWNDAQWVAAGGKLIPVSATDYNVVLPPYKPMAPASRTVGKTGESEAAVNTYTLSATAIDNHGNSSNPATLTVIVQQPQFVITSEVTDDGALADGRTPITVKFTVTNIDSTPVAEQEGVITTSNGALPSKVTKKTDAQGVISIALTSFTVGVSVVTLDIQGQQATVDVRFAVLPPDVTNSSFNVSPSDIVADGSMQSILTFVPRNKNNEFVSGITDLEFIQSGVPVTISPVTENADNYTASVVGNSVGDVDITPQVGGESLDLLQKRITLYPVPKITGINVNGEQFATDKGFPKTTFNKATFQLVMNDDVANNTQYDWTSSYAASAPVDNQGKVNIAYKTYGSTVTVTAKSKKFPSYTATYQFKPNLWVFSGTMSLQSSVEASRNCQRTDFTALIESARASNGSRSPDGTLWGEWGSLATYDSAEWPSGNYWTKKTSTDFVTMDMTTGDIPTSAATAYPLCAEPQ</sequence>
<accession>P19196</accession>
<protein>
    <recommendedName>
        <fullName>Invasin</fullName>
    </recommendedName>
</protein>
<feature type="chain" id="PRO_0000211830" description="Invasin">
    <location>
        <begin position="1"/>
        <end position="835"/>
    </location>
</feature>
<feature type="domain" description="Big-1" evidence="1">
    <location>
        <begin position="451"/>
        <end position="541"/>
    </location>
</feature>
<comment type="function">
    <text>Invasin is a protein that allows enteric bacteria to penetrate cultured mammalian cells. The entry of invasin in the cell is mediated by binding several beta-1 chain integrins.</text>
</comment>
<comment type="subcellular location">
    <subcellularLocation>
        <location>Cell outer membrane</location>
    </subcellularLocation>
</comment>
<comment type="similarity">
    <text evidence="2">Belongs to the intimin/invasin family.</text>
</comment>
<evidence type="ECO:0000255" key="1">
    <source>
        <dbReference type="PROSITE-ProRule" id="PRU00445"/>
    </source>
</evidence>
<evidence type="ECO:0000305" key="2"/>
<keyword id="KW-0998">Cell outer membrane</keyword>
<keyword id="KW-0472">Membrane</keyword>
<proteinExistence type="inferred from homology"/>
<reference key="1">
    <citation type="journal article" date="1990" name="Mol. Microbiol.">
        <title>Sequence, localization and function of the invasin protein of Yersinia enterocolitica.</title>
        <authorList>
            <person name="Young V.B."/>
            <person name="Miller V.L."/>
            <person name="Falkow S."/>
            <person name="Schoolnik G.K."/>
        </authorList>
    </citation>
    <scope>NUCLEOTIDE SEQUENCE [GENOMIC DNA]</scope>
    <source>
        <strain>8081C / Serotype O:8</strain>
    </source>
</reference>
<organism>
    <name type="scientific">Yersinia enterocolitica</name>
    <dbReference type="NCBI Taxonomy" id="630"/>
    <lineage>
        <taxon>Bacteria</taxon>
        <taxon>Pseudomonadati</taxon>
        <taxon>Pseudomonadota</taxon>
        <taxon>Gammaproteobacteria</taxon>
        <taxon>Enterobacterales</taxon>
        <taxon>Yersiniaceae</taxon>
        <taxon>Yersinia</taxon>
    </lineage>
</organism>